<keyword id="KW-0028">Amino-acid biosynthesis</keyword>
<keyword id="KW-0057">Aromatic amino acid biosynthesis</keyword>
<keyword id="KW-0963">Cytoplasm</keyword>
<keyword id="KW-0808">Transferase</keyword>
<gene>
    <name evidence="1" type="primary">aroA</name>
    <name type="ordered locus">CJJ81176_0904</name>
</gene>
<proteinExistence type="inferred from homology"/>
<evidence type="ECO:0000255" key="1">
    <source>
        <dbReference type="HAMAP-Rule" id="MF_00210"/>
    </source>
</evidence>
<evidence type="ECO:0000305" key="2"/>
<feature type="chain" id="PRO_0000325339" description="3-phosphoshikimate 1-carboxyvinyltransferase">
    <location>
        <begin position="1"/>
        <end position="428"/>
    </location>
</feature>
<feature type="active site" description="Proton acceptor" evidence="1">
    <location>
        <position position="313"/>
    </location>
</feature>
<feature type="binding site" evidence="1">
    <location>
        <position position="21"/>
    </location>
    <ligand>
        <name>3-phosphoshikimate</name>
        <dbReference type="ChEBI" id="CHEBI:145989"/>
    </ligand>
</feature>
<feature type="binding site" evidence="1">
    <location>
        <position position="21"/>
    </location>
    <ligand>
        <name>phosphoenolpyruvate</name>
        <dbReference type="ChEBI" id="CHEBI:58702"/>
    </ligand>
</feature>
<feature type="binding site" evidence="1">
    <location>
        <position position="22"/>
    </location>
    <ligand>
        <name>3-phosphoshikimate</name>
        <dbReference type="ChEBI" id="CHEBI:145989"/>
    </ligand>
</feature>
<feature type="binding site" evidence="1">
    <location>
        <position position="26"/>
    </location>
    <ligand>
        <name>3-phosphoshikimate</name>
        <dbReference type="ChEBI" id="CHEBI:145989"/>
    </ligand>
</feature>
<feature type="binding site" evidence="1">
    <location>
        <position position="91"/>
    </location>
    <ligand>
        <name>phosphoenolpyruvate</name>
        <dbReference type="ChEBI" id="CHEBI:58702"/>
    </ligand>
</feature>
<feature type="binding site" evidence="1">
    <location>
        <position position="119"/>
    </location>
    <ligand>
        <name>phosphoenolpyruvate</name>
        <dbReference type="ChEBI" id="CHEBI:58702"/>
    </ligand>
</feature>
<feature type="binding site" evidence="1">
    <location>
        <position position="164"/>
    </location>
    <ligand>
        <name>3-phosphoshikimate</name>
        <dbReference type="ChEBI" id="CHEBI:145989"/>
    </ligand>
</feature>
<feature type="binding site" evidence="1">
    <location>
        <position position="166"/>
    </location>
    <ligand>
        <name>3-phosphoshikimate</name>
        <dbReference type="ChEBI" id="CHEBI:145989"/>
    </ligand>
</feature>
<feature type="binding site" evidence="1">
    <location>
        <position position="166"/>
    </location>
    <ligand>
        <name>phosphoenolpyruvate</name>
        <dbReference type="ChEBI" id="CHEBI:58702"/>
    </ligand>
</feature>
<feature type="binding site" evidence="1">
    <location>
        <position position="313"/>
    </location>
    <ligand>
        <name>3-phosphoshikimate</name>
        <dbReference type="ChEBI" id="CHEBI:145989"/>
    </ligand>
</feature>
<feature type="binding site" evidence="1">
    <location>
        <position position="340"/>
    </location>
    <ligand>
        <name>3-phosphoshikimate</name>
        <dbReference type="ChEBI" id="CHEBI:145989"/>
    </ligand>
</feature>
<feature type="binding site" evidence="1">
    <location>
        <position position="344"/>
    </location>
    <ligand>
        <name>phosphoenolpyruvate</name>
        <dbReference type="ChEBI" id="CHEBI:58702"/>
    </ligand>
</feature>
<feature type="binding site" evidence="1">
    <location>
        <position position="386"/>
    </location>
    <ligand>
        <name>phosphoenolpyruvate</name>
        <dbReference type="ChEBI" id="CHEBI:58702"/>
    </ligand>
</feature>
<name>AROA_CAMJJ</name>
<protein>
    <recommendedName>
        <fullName evidence="1">3-phosphoshikimate 1-carboxyvinyltransferase</fullName>
        <ecNumber evidence="1">2.5.1.19</ecNumber>
    </recommendedName>
    <alternativeName>
        <fullName evidence="1">5-enolpyruvylshikimate-3-phosphate synthase</fullName>
        <shortName evidence="1">EPSP synthase</shortName>
        <shortName evidence="1">EPSPS</shortName>
    </alternativeName>
</protein>
<dbReference type="EC" id="2.5.1.19" evidence="1"/>
<dbReference type="EMBL" id="CP000538">
    <property type="protein sequence ID" value="EAQ72379.2"/>
    <property type="status" value="ALT_INIT"/>
    <property type="molecule type" value="Genomic_DNA"/>
</dbReference>
<dbReference type="RefSeq" id="WP_002869167.1">
    <property type="nucleotide sequence ID" value="NC_008787.1"/>
</dbReference>
<dbReference type="SMR" id="A1VZM9"/>
<dbReference type="KEGG" id="cjj:CJJ81176_0904"/>
<dbReference type="eggNOG" id="COG0128">
    <property type="taxonomic scope" value="Bacteria"/>
</dbReference>
<dbReference type="HOGENOM" id="CLU_024321_0_1_7"/>
<dbReference type="UniPathway" id="UPA00053">
    <property type="reaction ID" value="UER00089"/>
</dbReference>
<dbReference type="Proteomes" id="UP000000646">
    <property type="component" value="Chromosome"/>
</dbReference>
<dbReference type="GO" id="GO:0005737">
    <property type="term" value="C:cytoplasm"/>
    <property type="evidence" value="ECO:0007669"/>
    <property type="project" value="UniProtKB-SubCell"/>
</dbReference>
<dbReference type="GO" id="GO:0003866">
    <property type="term" value="F:3-phosphoshikimate 1-carboxyvinyltransferase activity"/>
    <property type="evidence" value="ECO:0007669"/>
    <property type="project" value="UniProtKB-UniRule"/>
</dbReference>
<dbReference type="GO" id="GO:0008652">
    <property type="term" value="P:amino acid biosynthetic process"/>
    <property type="evidence" value="ECO:0007669"/>
    <property type="project" value="UniProtKB-KW"/>
</dbReference>
<dbReference type="GO" id="GO:0009073">
    <property type="term" value="P:aromatic amino acid family biosynthetic process"/>
    <property type="evidence" value="ECO:0007669"/>
    <property type="project" value="UniProtKB-KW"/>
</dbReference>
<dbReference type="GO" id="GO:0009423">
    <property type="term" value="P:chorismate biosynthetic process"/>
    <property type="evidence" value="ECO:0007669"/>
    <property type="project" value="UniProtKB-UniRule"/>
</dbReference>
<dbReference type="CDD" id="cd01556">
    <property type="entry name" value="EPSP_synthase"/>
    <property type="match status" value="1"/>
</dbReference>
<dbReference type="FunFam" id="3.65.10.10:FF:000005">
    <property type="entry name" value="3-phosphoshikimate 1-carboxyvinyltransferase"/>
    <property type="match status" value="1"/>
</dbReference>
<dbReference type="Gene3D" id="3.65.10.10">
    <property type="entry name" value="Enolpyruvate transferase domain"/>
    <property type="match status" value="2"/>
</dbReference>
<dbReference type="HAMAP" id="MF_00210">
    <property type="entry name" value="EPSP_synth"/>
    <property type="match status" value="1"/>
</dbReference>
<dbReference type="InterPro" id="IPR001986">
    <property type="entry name" value="Enolpyruvate_Tfrase_dom"/>
</dbReference>
<dbReference type="InterPro" id="IPR036968">
    <property type="entry name" value="Enolpyruvate_Tfrase_sf"/>
</dbReference>
<dbReference type="InterPro" id="IPR006264">
    <property type="entry name" value="EPSP_synthase"/>
</dbReference>
<dbReference type="InterPro" id="IPR023193">
    <property type="entry name" value="EPSP_synthase_CS"/>
</dbReference>
<dbReference type="InterPro" id="IPR013792">
    <property type="entry name" value="RNA3'P_cycl/enolpyr_Trfase_a/b"/>
</dbReference>
<dbReference type="NCBIfam" id="TIGR01356">
    <property type="entry name" value="aroA"/>
    <property type="match status" value="1"/>
</dbReference>
<dbReference type="PANTHER" id="PTHR21090">
    <property type="entry name" value="AROM/DEHYDROQUINATE SYNTHASE"/>
    <property type="match status" value="1"/>
</dbReference>
<dbReference type="PANTHER" id="PTHR21090:SF5">
    <property type="entry name" value="PENTAFUNCTIONAL AROM POLYPEPTIDE"/>
    <property type="match status" value="1"/>
</dbReference>
<dbReference type="Pfam" id="PF00275">
    <property type="entry name" value="EPSP_synthase"/>
    <property type="match status" value="1"/>
</dbReference>
<dbReference type="PIRSF" id="PIRSF000505">
    <property type="entry name" value="EPSPS"/>
    <property type="match status" value="1"/>
</dbReference>
<dbReference type="SUPFAM" id="SSF55205">
    <property type="entry name" value="EPT/RTPC-like"/>
    <property type="match status" value="1"/>
</dbReference>
<dbReference type="PROSITE" id="PS00104">
    <property type="entry name" value="EPSP_SYNTHASE_1"/>
    <property type="match status" value="1"/>
</dbReference>
<dbReference type="PROSITE" id="PS00885">
    <property type="entry name" value="EPSP_SYNTHASE_2"/>
    <property type="match status" value="1"/>
</dbReference>
<organism>
    <name type="scientific">Campylobacter jejuni subsp. jejuni serotype O:23/36 (strain 81-176)</name>
    <dbReference type="NCBI Taxonomy" id="354242"/>
    <lineage>
        <taxon>Bacteria</taxon>
        <taxon>Pseudomonadati</taxon>
        <taxon>Campylobacterota</taxon>
        <taxon>Epsilonproteobacteria</taxon>
        <taxon>Campylobacterales</taxon>
        <taxon>Campylobacteraceae</taxon>
        <taxon>Campylobacter</taxon>
    </lineage>
</organism>
<comment type="function">
    <text evidence="1">Catalyzes the transfer of the enolpyruvyl moiety of phosphoenolpyruvate (PEP) to the 5-hydroxyl of shikimate-3-phosphate (S3P) to produce enolpyruvyl shikimate-3-phosphate and inorganic phosphate.</text>
</comment>
<comment type="catalytic activity">
    <reaction evidence="1">
        <text>3-phosphoshikimate + phosphoenolpyruvate = 5-O-(1-carboxyvinyl)-3-phosphoshikimate + phosphate</text>
        <dbReference type="Rhea" id="RHEA:21256"/>
        <dbReference type="ChEBI" id="CHEBI:43474"/>
        <dbReference type="ChEBI" id="CHEBI:57701"/>
        <dbReference type="ChEBI" id="CHEBI:58702"/>
        <dbReference type="ChEBI" id="CHEBI:145989"/>
        <dbReference type="EC" id="2.5.1.19"/>
    </reaction>
    <physiologicalReaction direction="left-to-right" evidence="1">
        <dbReference type="Rhea" id="RHEA:21257"/>
    </physiologicalReaction>
</comment>
<comment type="pathway">
    <text evidence="1">Metabolic intermediate biosynthesis; chorismate biosynthesis; chorismate from D-erythrose 4-phosphate and phosphoenolpyruvate: step 6/7.</text>
</comment>
<comment type="subunit">
    <text evidence="1">Monomer.</text>
</comment>
<comment type="subcellular location">
    <subcellularLocation>
        <location evidence="1">Cytoplasm</location>
    </subcellularLocation>
</comment>
<comment type="similarity">
    <text evidence="1">Belongs to the EPSP synthase family.</text>
</comment>
<comment type="sequence caution" evidence="2">
    <conflict type="erroneous initiation">
        <sequence resource="EMBL-CDS" id="EAQ72379"/>
    </conflict>
    <text>Truncated N-terminus.</text>
</comment>
<reference key="1">
    <citation type="submission" date="2006-12" db="EMBL/GenBank/DDBJ databases">
        <authorList>
            <person name="Fouts D.E."/>
            <person name="Nelson K.E."/>
            <person name="Sebastian Y."/>
        </authorList>
    </citation>
    <scope>NUCLEOTIDE SEQUENCE [LARGE SCALE GENOMIC DNA]</scope>
    <source>
        <strain>81-176</strain>
    </source>
</reference>
<accession>A1VZM9</accession>
<sequence length="428" mass="47346">MKIYKLQTPVNAILENIAADKSISHRFAIFSLLTQEENKAQNYLLAQDTLNTLEIIKNLGAKIEQKDSCVKIIPPKEILSPNCILDCGNSGTAMRLMIGFLAGISGFFVLSGDKYLNNRPMRRISKPLTQIGARIYGRNEANLAPLCIEGQKLKAFNFKSEISSAQVKTAMILSAFRADNVCTFSEISLSRNHSENMLKAMKAPIRVSNDDLSLEINPLKKPLKAQNIIIPNDPSSAFYFVLAAIILPKSQIILKNILLNPTRIEAYKILQKMGAKLEMTITQNDFETIGEIRVESSKLNGIEVKDNIAWLIDEAPALAIAFALAKGKSSLINAKELRVKESDRIAVMVENLKLCGVEARELDDGFEIEGGCELKSSKIKSYGDHRIAMSFAILGLLCGIEIDDSDCIKTSFPNFIEILSNLGARIDY</sequence>